<accession>Q6NBF3</accession>
<name>HEMH_RHOPA</name>
<sequence>MSVIVPIHGPAIAPAPAPERVGVLLVNLGTPDSCDTKGVRIYLREFLSDPRVIENQGLFWKLALNGIILNTRPARKAKDYQKIWNHEKNESPLKTITRAQAEKLSASLGDRGHLIVDWAMRYGNPSLRDRIEALVAKGCTRLLVVPLYPQYSAATSATVCDQAFRVLRELRAQPTLRVTPPYYRDSAYIDALATSIKSHLASLTFEPELIVASFHGMPQAYIDKGDPYQAQCVATVEALRERMGVADDKLLLTFQSRFGFDQWLQPYTDKTIEALARKGVRKLAVVMPGFSADCLETLEEIAQENAEIFMEHGGEEFTAIPCLNDSDAGVQVIRQLVLRELQGWL</sequence>
<dbReference type="EC" id="4.98.1.1" evidence="1"/>
<dbReference type="EMBL" id="BX572595">
    <property type="protein sequence ID" value="CAE26319.1"/>
    <property type="molecule type" value="Genomic_DNA"/>
</dbReference>
<dbReference type="RefSeq" id="WP_011156410.1">
    <property type="nucleotide sequence ID" value="NZ_CP116810.1"/>
</dbReference>
<dbReference type="SMR" id="Q6NBF3"/>
<dbReference type="STRING" id="258594.RPA0875"/>
<dbReference type="GeneID" id="66891892"/>
<dbReference type="eggNOG" id="COG0276">
    <property type="taxonomic scope" value="Bacteria"/>
</dbReference>
<dbReference type="HOGENOM" id="CLU_018884_0_0_5"/>
<dbReference type="PhylomeDB" id="Q6NBF3"/>
<dbReference type="UniPathway" id="UPA00252">
    <property type="reaction ID" value="UER00325"/>
</dbReference>
<dbReference type="GO" id="GO:0005737">
    <property type="term" value="C:cytoplasm"/>
    <property type="evidence" value="ECO:0007669"/>
    <property type="project" value="UniProtKB-SubCell"/>
</dbReference>
<dbReference type="GO" id="GO:0004325">
    <property type="term" value="F:ferrochelatase activity"/>
    <property type="evidence" value="ECO:0007669"/>
    <property type="project" value="UniProtKB-UniRule"/>
</dbReference>
<dbReference type="GO" id="GO:0046872">
    <property type="term" value="F:metal ion binding"/>
    <property type="evidence" value="ECO:0007669"/>
    <property type="project" value="UniProtKB-KW"/>
</dbReference>
<dbReference type="GO" id="GO:0006783">
    <property type="term" value="P:heme biosynthetic process"/>
    <property type="evidence" value="ECO:0007669"/>
    <property type="project" value="UniProtKB-UniRule"/>
</dbReference>
<dbReference type="CDD" id="cd00419">
    <property type="entry name" value="Ferrochelatase_C"/>
    <property type="match status" value="1"/>
</dbReference>
<dbReference type="CDD" id="cd03411">
    <property type="entry name" value="Ferrochelatase_N"/>
    <property type="match status" value="1"/>
</dbReference>
<dbReference type="FunFam" id="3.40.50.1400:FF:000002">
    <property type="entry name" value="Ferrochelatase"/>
    <property type="match status" value="1"/>
</dbReference>
<dbReference type="Gene3D" id="3.40.50.1400">
    <property type="match status" value="2"/>
</dbReference>
<dbReference type="HAMAP" id="MF_00323">
    <property type="entry name" value="Ferrochelatase"/>
    <property type="match status" value="1"/>
</dbReference>
<dbReference type="InterPro" id="IPR001015">
    <property type="entry name" value="Ferrochelatase"/>
</dbReference>
<dbReference type="InterPro" id="IPR019772">
    <property type="entry name" value="Ferrochelatase_AS"/>
</dbReference>
<dbReference type="InterPro" id="IPR033644">
    <property type="entry name" value="Ferrochelatase_C"/>
</dbReference>
<dbReference type="InterPro" id="IPR033659">
    <property type="entry name" value="Ferrochelatase_N"/>
</dbReference>
<dbReference type="NCBIfam" id="TIGR00109">
    <property type="entry name" value="hemH"/>
    <property type="match status" value="1"/>
</dbReference>
<dbReference type="PANTHER" id="PTHR11108">
    <property type="entry name" value="FERROCHELATASE"/>
    <property type="match status" value="1"/>
</dbReference>
<dbReference type="PANTHER" id="PTHR11108:SF1">
    <property type="entry name" value="FERROCHELATASE, MITOCHONDRIAL"/>
    <property type="match status" value="1"/>
</dbReference>
<dbReference type="Pfam" id="PF00762">
    <property type="entry name" value="Ferrochelatase"/>
    <property type="match status" value="1"/>
</dbReference>
<dbReference type="SUPFAM" id="SSF53800">
    <property type="entry name" value="Chelatase"/>
    <property type="match status" value="1"/>
</dbReference>
<dbReference type="PROSITE" id="PS00534">
    <property type="entry name" value="FERROCHELATASE"/>
    <property type="match status" value="1"/>
</dbReference>
<organism>
    <name type="scientific">Rhodopseudomonas palustris (strain ATCC BAA-98 / CGA009)</name>
    <dbReference type="NCBI Taxonomy" id="258594"/>
    <lineage>
        <taxon>Bacteria</taxon>
        <taxon>Pseudomonadati</taxon>
        <taxon>Pseudomonadota</taxon>
        <taxon>Alphaproteobacteria</taxon>
        <taxon>Hyphomicrobiales</taxon>
        <taxon>Nitrobacteraceae</taxon>
        <taxon>Rhodopseudomonas</taxon>
    </lineage>
</organism>
<proteinExistence type="inferred from homology"/>
<gene>
    <name evidence="1" type="primary">hemH</name>
    <name type="ordered locus">RPA0875</name>
</gene>
<protein>
    <recommendedName>
        <fullName evidence="1">Ferrochelatase</fullName>
        <ecNumber evidence="1">4.98.1.1</ecNumber>
    </recommendedName>
    <alternativeName>
        <fullName evidence="1">Heme synthase</fullName>
    </alternativeName>
    <alternativeName>
        <fullName evidence="1">Protoheme ferro-lyase</fullName>
    </alternativeName>
</protein>
<keyword id="KW-0963">Cytoplasm</keyword>
<keyword id="KW-0350">Heme biosynthesis</keyword>
<keyword id="KW-0408">Iron</keyword>
<keyword id="KW-0456">Lyase</keyword>
<keyword id="KW-0479">Metal-binding</keyword>
<keyword id="KW-0627">Porphyrin biosynthesis</keyword>
<evidence type="ECO:0000255" key="1">
    <source>
        <dbReference type="HAMAP-Rule" id="MF_00323"/>
    </source>
</evidence>
<comment type="function">
    <text evidence="1">Catalyzes the ferrous insertion into protoporphyrin IX.</text>
</comment>
<comment type="catalytic activity">
    <reaction evidence="1">
        <text>heme b + 2 H(+) = protoporphyrin IX + Fe(2+)</text>
        <dbReference type="Rhea" id="RHEA:22584"/>
        <dbReference type="ChEBI" id="CHEBI:15378"/>
        <dbReference type="ChEBI" id="CHEBI:29033"/>
        <dbReference type="ChEBI" id="CHEBI:57306"/>
        <dbReference type="ChEBI" id="CHEBI:60344"/>
        <dbReference type="EC" id="4.98.1.1"/>
    </reaction>
</comment>
<comment type="pathway">
    <text evidence="1">Porphyrin-containing compound metabolism; protoheme biosynthesis; protoheme from protoporphyrin-IX: step 1/1.</text>
</comment>
<comment type="subcellular location">
    <subcellularLocation>
        <location evidence="1">Cytoplasm</location>
    </subcellularLocation>
</comment>
<comment type="similarity">
    <text evidence="1">Belongs to the ferrochelatase family.</text>
</comment>
<feature type="chain" id="PRO_0000175192" description="Ferrochelatase">
    <location>
        <begin position="1"/>
        <end position="345"/>
    </location>
</feature>
<feature type="binding site" evidence="1">
    <location>
        <position position="215"/>
    </location>
    <ligand>
        <name>Fe cation</name>
        <dbReference type="ChEBI" id="CHEBI:24875"/>
    </ligand>
</feature>
<feature type="binding site" evidence="1">
    <location>
        <position position="296"/>
    </location>
    <ligand>
        <name>Fe cation</name>
        <dbReference type="ChEBI" id="CHEBI:24875"/>
    </ligand>
</feature>
<reference key="1">
    <citation type="journal article" date="2004" name="Nat. Biotechnol.">
        <title>Complete genome sequence of the metabolically versatile photosynthetic bacterium Rhodopseudomonas palustris.</title>
        <authorList>
            <person name="Larimer F.W."/>
            <person name="Chain P."/>
            <person name="Hauser L."/>
            <person name="Lamerdin J.E."/>
            <person name="Malfatti S."/>
            <person name="Do L."/>
            <person name="Land M.L."/>
            <person name="Pelletier D.A."/>
            <person name="Beatty J.T."/>
            <person name="Lang A.S."/>
            <person name="Tabita F.R."/>
            <person name="Gibson J.L."/>
            <person name="Hanson T.E."/>
            <person name="Bobst C."/>
            <person name="Torres y Torres J.L."/>
            <person name="Peres C."/>
            <person name="Harrison F.H."/>
            <person name="Gibson J."/>
            <person name="Harwood C.S."/>
        </authorList>
    </citation>
    <scope>NUCLEOTIDE SEQUENCE [LARGE SCALE GENOMIC DNA]</scope>
    <source>
        <strain>ATCC BAA-98 / CGA009</strain>
    </source>
</reference>